<sequence length="383" mass="39745">MKLTSIPIASTLLSLLAASGTLASPLHKRDDPLNNKQFGLMSIHSGNSYVHLHPFYVGDSGAIYLDPTDGTSTSAVFSMSNGRLVVGNLYASVDSNGTTIFKSDANAASTKFSAGDATNVGYNLLYNGTQSAVACPASDNDQVYQVYFGAGNGNPNCAGIAIEAFVSPSSSSSSSSSAATSTSTRVSSSAKASTSSGAIAYTTKCVVVPVTASATATAKAASAAASSAVYPLFPHGIRLIDSANPSSNSGNVYSPVVFQKQNNHTNTIFTFDVPQVSGSCELNLHLDTSGFPITVEGSNGVGQFILFNLSSVANDSTVYSNRPNRIAEIGRFNCSSSGCDYATNVTCPNSYTAVSYEMMALTDDSYLSFFEEADPLEGLTLRV</sequence>
<gene>
    <name type="ORF">SPAC27D7.09c</name>
    <name type="ORF">SPAC27D7.10c</name>
</gene>
<dbReference type="EMBL" id="CU329670">
    <property type="protein sequence ID" value="CAA15828.1"/>
    <property type="molecule type" value="Genomic_DNA"/>
</dbReference>
<dbReference type="PIR" id="T38442">
    <property type="entry name" value="T38442"/>
</dbReference>
<dbReference type="RefSeq" id="NP_594615.1">
    <property type="nucleotide sequence ID" value="NM_001020043.2"/>
</dbReference>
<dbReference type="BioGRID" id="279146">
    <property type="interactions" value="5"/>
</dbReference>
<dbReference type="STRING" id="284812.O42663"/>
<dbReference type="iPTMnet" id="O42663"/>
<dbReference type="PaxDb" id="4896-SPAC27D7.09c.1"/>
<dbReference type="EnsemblFungi" id="SPAC27D7.09c.1">
    <property type="protein sequence ID" value="SPAC27D7.09c.1:pep"/>
    <property type="gene ID" value="SPAC27D7.09c"/>
</dbReference>
<dbReference type="KEGG" id="spo:2542693"/>
<dbReference type="PomBase" id="SPAC27D7.09c"/>
<dbReference type="VEuPathDB" id="FungiDB:SPAC27D7.09c"/>
<dbReference type="eggNOG" id="ENOG502RYJ6">
    <property type="taxonomic scope" value="Eukaryota"/>
</dbReference>
<dbReference type="HOGENOM" id="CLU_059610_0_0_1"/>
<dbReference type="InParanoid" id="O42663"/>
<dbReference type="OMA" id="YTTKCVV"/>
<dbReference type="PRO" id="PR:O42663"/>
<dbReference type="Proteomes" id="UP000002485">
    <property type="component" value="Chromosome I"/>
</dbReference>
<dbReference type="GO" id="GO:0005737">
    <property type="term" value="C:cytoplasm"/>
    <property type="evidence" value="ECO:0007669"/>
    <property type="project" value="UniProtKB-SubCell"/>
</dbReference>
<dbReference type="GO" id="GO:0005634">
    <property type="term" value="C:nucleus"/>
    <property type="evidence" value="ECO:0007669"/>
    <property type="project" value="UniProtKB-SubCell"/>
</dbReference>
<dbReference type="InterPro" id="IPR018620">
    <property type="entry name" value="Ubiquitin3-bd_protein_But2_C"/>
</dbReference>
<dbReference type="PANTHER" id="PTHR39613">
    <property type="entry name" value="ANCHORED CELL WALL PROTEIN, PUTATIVE (AFU_ORTHOLOGUE AFUA_4G08960)-RELATED"/>
    <property type="match status" value="1"/>
</dbReference>
<dbReference type="PANTHER" id="PTHR39613:SF1">
    <property type="entry name" value="ANCHORED CELL WALL PROTEIN, PUTATIVE (AFU_ORTHOLOGUE AFUA_4G08960)-RELATED"/>
    <property type="match status" value="1"/>
</dbReference>
<dbReference type="Pfam" id="PF09792">
    <property type="entry name" value="But2"/>
    <property type="match status" value="1"/>
</dbReference>
<proteinExistence type="inferred from homology"/>
<protein>
    <recommendedName>
        <fullName>Uncharacterized but2-like protein C27D7.09c</fullName>
    </recommendedName>
</protein>
<name>YF89_SCHPO</name>
<accession>O42663</accession>
<reference key="1">
    <citation type="journal article" date="2002" name="Nature">
        <title>The genome sequence of Schizosaccharomyces pombe.</title>
        <authorList>
            <person name="Wood V."/>
            <person name="Gwilliam R."/>
            <person name="Rajandream M.A."/>
            <person name="Lyne M.H."/>
            <person name="Lyne R."/>
            <person name="Stewart A."/>
            <person name="Sgouros J.G."/>
            <person name="Peat N."/>
            <person name="Hayles J."/>
            <person name="Baker S.G."/>
            <person name="Basham D."/>
            <person name="Bowman S."/>
            <person name="Brooks K."/>
            <person name="Brown D."/>
            <person name="Brown S."/>
            <person name="Chillingworth T."/>
            <person name="Churcher C.M."/>
            <person name="Collins M."/>
            <person name="Connor R."/>
            <person name="Cronin A."/>
            <person name="Davis P."/>
            <person name="Feltwell T."/>
            <person name="Fraser A."/>
            <person name="Gentles S."/>
            <person name="Goble A."/>
            <person name="Hamlin N."/>
            <person name="Harris D.E."/>
            <person name="Hidalgo J."/>
            <person name="Hodgson G."/>
            <person name="Holroyd S."/>
            <person name="Hornsby T."/>
            <person name="Howarth S."/>
            <person name="Huckle E.J."/>
            <person name="Hunt S."/>
            <person name="Jagels K."/>
            <person name="James K.D."/>
            <person name="Jones L."/>
            <person name="Jones M."/>
            <person name="Leather S."/>
            <person name="McDonald S."/>
            <person name="McLean J."/>
            <person name="Mooney P."/>
            <person name="Moule S."/>
            <person name="Mungall K.L."/>
            <person name="Murphy L.D."/>
            <person name="Niblett D."/>
            <person name="Odell C."/>
            <person name="Oliver K."/>
            <person name="O'Neil S."/>
            <person name="Pearson D."/>
            <person name="Quail M.A."/>
            <person name="Rabbinowitsch E."/>
            <person name="Rutherford K.M."/>
            <person name="Rutter S."/>
            <person name="Saunders D."/>
            <person name="Seeger K."/>
            <person name="Sharp S."/>
            <person name="Skelton J."/>
            <person name="Simmonds M.N."/>
            <person name="Squares R."/>
            <person name="Squares S."/>
            <person name="Stevens K."/>
            <person name="Taylor K."/>
            <person name="Taylor R.G."/>
            <person name="Tivey A."/>
            <person name="Walsh S.V."/>
            <person name="Warren T."/>
            <person name="Whitehead S."/>
            <person name="Woodward J.R."/>
            <person name="Volckaert G."/>
            <person name="Aert R."/>
            <person name="Robben J."/>
            <person name="Grymonprez B."/>
            <person name="Weltjens I."/>
            <person name="Vanstreels E."/>
            <person name="Rieger M."/>
            <person name="Schaefer M."/>
            <person name="Mueller-Auer S."/>
            <person name="Gabel C."/>
            <person name="Fuchs M."/>
            <person name="Duesterhoeft A."/>
            <person name="Fritzc C."/>
            <person name="Holzer E."/>
            <person name="Moestl D."/>
            <person name="Hilbert H."/>
            <person name="Borzym K."/>
            <person name="Langer I."/>
            <person name="Beck A."/>
            <person name="Lehrach H."/>
            <person name="Reinhardt R."/>
            <person name="Pohl T.M."/>
            <person name="Eger P."/>
            <person name="Zimmermann W."/>
            <person name="Wedler H."/>
            <person name="Wambutt R."/>
            <person name="Purnelle B."/>
            <person name="Goffeau A."/>
            <person name="Cadieu E."/>
            <person name="Dreano S."/>
            <person name="Gloux S."/>
            <person name="Lelaure V."/>
            <person name="Mottier S."/>
            <person name="Galibert F."/>
            <person name="Aves S.J."/>
            <person name="Xiang Z."/>
            <person name="Hunt C."/>
            <person name="Moore K."/>
            <person name="Hurst S.M."/>
            <person name="Lucas M."/>
            <person name="Rochet M."/>
            <person name="Gaillardin C."/>
            <person name="Tallada V.A."/>
            <person name="Garzon A."/>
            <person name="Thode G."/>
            <person name="Daga R.R."/>
            <person name="Cruzado L."/>
            <person name="Jimenez J."/>
            <person name="Sanchez M."/>
            <person name="del Rey F."/>
            <person name="Benito J."/>
            <person name="Dominguez A."/>
            <person name="Revuelta J.L."/>
            <person name="Moreno S."/>
            <person name="Armstrong J."/>
            <person name="Forsburg S.L."/>
            <person name="Cerutti L."/>
            <person name="Lowe T."/>
            <person name="McCombie W.R."/>
            <person name="Paulsen I."/>
            <person name="Potashkin J."/>
            <person name="Shpakovski G.V."/>
            <person name="Ussery D."/>
            <person name="Barrell B.G."/>
            <person name="Nurse P."/>
        </authorList>
    </citation>
    <scope>NUCLEOTIDE SEQUENCE [LARGE SCALE GENOMIC DNA]</scope>
    <source>
        <strain>972 / ATCC 24843</strain>
    </source>
</reference>
<reference key="2">
    <citation type="journal article" date="2006" name="Nat. Biotechnol.">
        <title>ORFeome cloning and global analysis of protein localization in the fission yeast Schizosaccharomyces pombe.</title>
        <authorList>
            <person name="Matsuyama A."/>
            <person name="Arai R."/>
            <person name="Yashiroda Y."/>
            <person name="Shirai A."/>
            <person name="Kamata A."/>
            <person name="Sekido S."/>
            <person name="Kobayashi Y."/>
            <person name="Hashimoto A."/>
            <person name="Hamamoto M."/>
            <person name="Hiraoka Y."/>
            <person name="Horinouchi S."/>
            <person name="Yoshida M."/>
        </authorList>
    </citation>
    <scope>SUBCELLULAR LOCATION [LARGE SCALE ANALYSIS]</scope>
</reference>
<evidence type="ECO:0000255" key="1"/>
<evidence type="ECO:0000269" key="2">
    <source>
    </source>
</evidence>
<evidence type="ECO:0000305" key="3"/>
<feature type="signal peptide" evidence="1">
    <location>
        <begin position="1"/>
        <end position="23"/>
    </location>
</feature>
<feature type="chain" id="PRO_0000372622" description="Uncharacterized but2-like protein C27D7.09c">
    <location>
        <begin position="24"/>
        <end position="383"/>
    </location>
</feature>
<organism>
    <name type="scientific">Schizosaccharomyces pombe (strain 972 / ATCC 24843)</name>
    <name type="common">Fission yeast</name>
    <dbReference type="NCBI Taxonomy" id="284812"/>
    <lineage>
        <taxon>Eukaryota</taxon>
        <taxon>Fungi</taxon>
        <taxon>Dikarya</taxon>
        <taxon>Ascomycota</taxon>
        <taxon>Taphrinomycotina</taxon>
        <taxon>Schizosaccharomycetes</taxon>
        <taxon>Schizosaccharomycetales</taxon>
        <taxon>Schizosaccharomycetaceae</taxon>
        <taxon>Schizosaccharomyces</taxon>
    </lineage>
</organism>
<keyword id="KW-0963">Cytoplasm</keyword>
<keyword id="KW-0539">Nucleus</keyword>
<keyword id="KW-1185">Reference proteome</keyword>
<keyword id="KW-0732">Signal</keyword>
<comment type="subcellular location">
    <subcellularLocation>
        <location evidence="2">Cytoplasm</location>
    </subcellularLocation>
    <subcellularLocation>
        <location evidence="2">Nucleus</location>
    </subcellularLocation>
</comment>
<comment type="similarity">
    <text evidence="3">Belongs to the but2 family.</text>
</comment>